<evidence type="ECO:0000255" key="1"/>
<evidence type="ECO:0000305" key="2"/>
<organism>
    <name type="scientific">Aeromonas hydrophila</name>
    <dbReference type="NCBI Taxonomy" id="644"/>
    <lineage>
        <taxon>Bacteria</taxon>
        <taxon>Pseudomonadati</taxon>
        <taxon>Pseudomonadota</taxon>
        <taxon>Gammaproteobacteria</taxon>
        <taxon>Aeromonadales</taxon>
        <taxon>Aeromonadaceae</taxon>
        <taxon>Aeromonas</taxon>
    </lineage>
</organism>
<comment type="function">
    <text>Involved in a general secretion pathway (GSP) for the export of proteins.</text>
</comment>
<comment type="subcellular location">
    <subcellularLocation>
        <location evidence="2">Cell inner membrane</location>
        <topology evidence="2">Single-pass membrane protein</topology>
    </subcellularLocation>
</comment>
<comment type="similarity">
    <text evidence="2">Belongs to the ExeB/OutB/PulB family.</text>
</comment>
<feature type="chain" id="PRO_0000214995" description="General secretion pathway protein B">
    <location>
        <begin position="1"/>
        <end position="226"/>
    </location>
</feature>
<feature type="transmembrane region" description="Helical" evidence="1">
    <location>
        <begin position="37"/>
        <end position="57"/>
    </location>
</feature>
<reference key="1">
    <citation type="journal article" date="1994" name="J. Bacteriol.">
        <title>Isolation and characterization of a second exe operon required for extracellular protein secretion in Aeromonas hydrophila.</title>
        <authorList>
            <person name="Jahagirdar R."/>
            <person name="Howard S.P."/>
        </authorList>
    </citation>
    <scope>NUCLEOTIDE SEQUENCE [GENOMIC DNA]</scope>
    <source>
        <strain>Ah65</strain>
    </source>
</reference>
<keyword id="KW-0997">Cell inner membrane</keyword>
<keyword id="KW-1003">Cell membrane</keyword>
<keyword id="KW-0472">Membrane</keyword>
<keyword id="KW-0812">Transmembrane</keyword>
<keyword id="KW-1133">Transmembrane helix</keyword>
<keyword id="KW-0813">Transport</keyword>
<accession>P45755</accession>
<dbReference type="EMBL" id="X81473">
    <property type="protein sequence ID" value="CAA57226.1"/>
    <property type="molecule type" value="Genomic_DNA"/>
</dbReference>
<dbReference type="PIR" id="I39594">
    <property type="entry name" value="I39594"/>
</dbReference>
<dbReference type="SMR" id="P45755"/>
<dbReference type="TCDB" id="9.B.42.1.1">
    <property type="family name" value="the exeab (exeab) secretin assembly/export complex family"/>
</dbReference>
<dbReference type="GO" id="GO:0005886">
    <property type="term" value="C:plasma membrane"/>
    <property type="evidence" value="ECO:0007669"/>
    <property type="project" value="UniProtKB-SubCell"/>
</dbReference>
<dbReference type="GO" id="GO:0015627">
    <property type="term" value="C:type II protein secretion system complex"/>
    <property type="evidence" value="ECO:0007669"/>
    <property type="project" value="InterPro"/>
</dbReference>
<dbReference type="InterPro" id="IPR032389">
    <property type="entry name" value="GspB_C"/>
</dbReference>
<dbReference type="NCBIfam" id="NF037978">
    <property type="entry name" value="T2SS_GspB"/>
    <property type="match status" value="1"/>
</dbReference>
<dbReference type="Pfam" id="PF16537">
    <property type="entry name" value="T2SSB"/>
    <property type="match status" value="1"/>
</dbReference>
<name>GSPB_AERHY</name>
<protein>
    <recommendedName>
        <fullName>General secretion pathway protein B</fullName>
    </recommendedName>
</protein>
<sequence>MSTLLKALRRAEQPQFTPHIPAMGLPVTQEEEQNRRWIWWLLAPLALLMGAGANYGWHLLNNRPIEKTVEVKEVVTPPFVRVEPRPMITRPLPPPLPEPVVRPRVTPNDSAPAANGSQGLAERIMNALNSTPLMEETAPQAQSESQAMPISALPLELKQRVPPLAYGSHVFSSNPAKRAVMLNGREFREGSEVAPGVTLIAIAQDYIILQVAGQNVSLKALQDWRG</sequence>
<gene>
    <name type="primary">exeB</name>
</gene>
<proteinExistence type="inferred from homology"/>